<feature type="chain" id="PRO_0000116232" description="Protein U59">
    <location>
        <begin position="1"/>
        <end position="350"/>
    </location>
</feature>
<name>UL88_HHV6U</name>
<organism>
    <name type="scientific">Human herpesvirus 6A (strain Uganda-1102)</name>
    <name type="common">HHV-6 variant A</name>
    <name type="synonym">Human B lymphotropic virus</name>
    <dbReference type="NCBI Taxonomy" id="10370"/>
    <lineage>
        <taxon>Viruses</taxon>
        <taxon>Duplodnaviria</taxon>
        <taxon>Heunggongvirae</taxon>
        <taxon>Peploviricota</taxon>
        <taxon>Herviviricetes</taxon>
        <taxon>Herpesvirales</taxon>
        <taxon>Orthoherpesviridae</taxon>
        <taxon>Betaherpesvirinae</taxon>
        <taxon>Roseolovirus</taxon>
        <taxon>Roseolovirus humanbeta6a</taxon>
        <taxon>Human betaherpesvirus 6A</taxon>
    </lineage>
</organism>
<keyword id="KW-1185">Reference proteome</keyword>
<evidence type="ECO:0000305" key="1"/>
<organismHost>
    <name type="scientific">Homo sapiens</name>
    <name type="common">Human</name>
    <dbReference type="NCBI Taxonomy" id="9606"/>
</organismHost>
<protein>
    <recommendedName>
        <fullName>Protein U59</fullName>
    </recommendedName>
</protein>
<comment type="similarity">
    <text evidence="1">Belongs to the herpesviridae U59/UL88 family.</text>
</comment>
<gene>
    <name type="primary">U59</name>
    <name type="synonym">6R</name>
</gene>
<accession>P24438</accession>
<reference key="1">
    <citation type="journal article" date="1990" name="J. Virol.">
        <title>Human herpesvirus 6 is closely related to human cytomegalovirus.</title>
        <authorList>
            <person name="Lawrence G.L."/>
            <person name="Chee M."/>
            <person name="Craxton M.A."/>
            <person name="Gompels U.A."/>
            <person name="Honess R.W."/>
            <person name="Barrell B.G."/>
        </authorList>
    </citation>
    <scope>NUCLEOTIDE SEQUENCE [GENOMIC DNA]</scope>
</reference>
<reference key="2">
    <citation type="journal article" date="1995" name="Virology">
        <title>The DNA sequence of human herpesvirus-6: structure, coding content, and genome evolution.</title>
        <authorList>
            <person name="Gompels U.A."/>
            <person name="Nicholas J."/>
            <person name="Lawrence G.L."/>
            <person name="Jones M."/>
            <person name="Thomson B.J."/>
            <person name="Martin M.E.D."/>
            <person name="Efstathiou S."/>
            <person name="Craxton M.A."/>
            <person name="Macaulay H.A."/>
        </authorList>
    </citation>
    <scope>NUCLEOTIDE SEQUENCE [LARGE SCALE GENOMIC DNA]</scope>
</reference>
<dbReference type="EMBL" id="M68963">
    <property type="protein sequence ID" value="AAA65569.1"/>
    <property type="molecule type" value="Genomic_DNA"/>
</dbReference>
<dbReference type="EMBL" id="X83413">
    <property type="protein sequence ID" value="CAA58351.1"/>
    <property type="molecule type" value="Genomic_DNA"/>
</dbReference>
<dbReference type="PIR" id="G33560">
    <property type="entry name" value="G33560"/>
</dbReference>
<dbReference type="RefSeq" id="NP_042952.1">
    <property type="nucleotide sequence ID" value="NC_001664.2"/>
</dbReference>
<dbReference type="DNASU" id="1487941"/>
<dbReference type="GeneID" id="1487941"/>
<dbReference type="KEGG" id="vg:1487941"/>
<dbReference type="Proteomes" id="UP000009295">
    <property type="component" value="Segment"/>
</dbReference>
<dbReference type="InterPro" id="IPR007616">
    <property type="entry name" value="Herpes_U59/UL88"/>
</dbReference>
<dbReference type="Pfam" id="PF04529">
    <property type="entry name" value="Herpes_U59"/>
    <property type="match status" value="1"/>
</dbReference>
<sequence length="350" mass="39883">MNVLVADEWFDCAIRLDSETIAVHEIFNPELSKLLNLHSKTVYMSDLCAFISGCVNRNVGKLTIYWHVNGDIIYALTGILHCVKIKIECGERIADGRYRLYEIPKLFLMRGQSTPMELKWKHAVGIATTNKPLLTHVLTDVLETSPFTLPDTLLSVQELSIFRERLSYIYYVLGSDVDIVARTEREIFQKCAELARLQQVFLIQGNIMENFVLAQACLFQLGADGLWEEISGSVRPRPELMSSAFIQHRVMLNNCYCIAVIFNAIYKHKLSLPTVERSHETVNRVAQEYYKSYVNAPLSVLVCATKVLTLFTEEYNFKSALVFVSQFFQVDVEASRADVIRLFLACLKGD</sequence>
<proteinExistence type="inferred from homology"/>